<dbReference type="EMBL" id="CP000394">
    <property type="protein sequence ID" value="ABI61475.1"/>
    <property type="molecule type" value="Genomic_DNA"/>
</dbReference>
<dbReference type="RefSeq" id="WP_011631284.1">
    <property type="nucleotide sequence ID" value="NC_008343.2"/>
</dbReference>
<dbReference type="SMR" id="Q0BUM7"/>
<dbReference type="STRING" id="391165.GbCGDNIH1_0577"/>
<dbReference type="GeneID" id="69744830"/>
<dbReference type="KEGG" id="gbe:GbCGDNIH1_0577"/>
<dbReference type="eggNOG" id="COG0100">
    <property type="taxonomic scope" value="Bacteria"/>
</dbReference>
<dbReference type="HOGENOM" id="CLU_072439_5_0_5"/>
<dbReference type="OrthoDB" id="9806415at2"/>
<dbReference type="Proteomes" id="UP000001963">
    <property type="component" value="Chromosome"/>
</dbReference>
<dbReference type="GO" id="GO:1990904">
    <property type="term" value="C:ribonucleoprotein complex"/>
    <property type="evidence" value="ECO:0007669"/>
    <property type="project" value="UniProtKB-KW"/>
</dbReference>
<dbReference type="GO" id="GO:0005840">
    <property type="term" value="C:ribosome"/>
    <property type="evidence" value="ECO:0007669"/>
    <property type="project" value="UniProtKB-KW"/>
</dbReference>
<dbReference type="GO" id="GO:0019843">
    <property type="term" value="F:rRNA binding"/>
    <property type="evidence" value="ECO:0007669"/>
    <property type="project" value="UniProtKB-UniRule"/>
</dbReference>
<dbReference type="GO" id="GO:0003735">
    <property type="term" value="F:structural constituent of ribosome"/>
    <property type="evidence" value="ECO:0007669"/>
    <property type="project" value="InterPro"/>
</dbReference>
<dbReference type="GO" id="GO:0006412">
    <property type="term" value="P:translation"/>
    <property type="evidence" value="ECO:0007669"/>
    <property type="project" value="UniProtKB-UniRule"/>
</dbReference>
<dbReference type="FunFam" id="3.30.420.80:FF:000001">
    <property type="entry name" value="30S ribosomal protein S11"/>
    <property type="match status" value="1"/>
</dbReference>
<dbReference type="Gene3D" id="3.30.420.80">
    <property type="entry name" value="Ribosomal protein S11"/>
    <property type="match status" value="1"/>
</dbReference>
<dbReference type="HAMAP" id="MF_01310">
    <property type="entry name" value="Ribosomal_uS11"/>
    <property type="match status" value="1"/>
</dbReference>
<dbReference type="InterPro" id="IPR001971">
    <property type="entry name" value="Ribosomal_uS11"/>
</dbReference>
<dbReference type="InterPro" id="IPR019981">
    <property type="entry name" value="Ribosomal_uS11_bac-type"/>
</dbReference>
<dbReference type="InterPro" id="IPR018102">
    <property type="entry name" value="Ribosomal_uS11_CS"/>
</dbReference>
<dbReference type="InterPro" id="IPR036967">
    <property type="entry name" value="Ribosomal_uS11_sf"/>
</dbReference>
<dbReference type="NCBIfam" id="NF003698">
    <property type="entry name" value="PRK05309.1"/>
    <property type="match status" value="1"/>
</dbReference>
<dbReference type="NCBIfam" id="TIGR03632">
    <property type="entry name" value="uS11_bact"/>
    <property type="match status" value="1"/>
</dbReference>
<dbReference type="PANTHER" id="PTHR11759">
    <property type="entry name" value="40S RIBOSOMAL PROTEIN S14/30S RIBOSOMAL PROTEIN S11"/>
    <property type="match status" value="1"/>
</dbReference>
<dbReference type="Pfam" id="PF00411">
    <property type="entry name" value="Ribosomal_S11"/>
    <property type="match status" value="1"/>
</dbReference>
<dbReference type="PIRSF" id="PIRSF002131">
    <property type="entry name" value="Ribosomal_S11"/>
    <property type="match status" value="1"/>
</dbReference>
<dbReference type="SUPFAM" id="SSF53137">
    <property type="entry name" value="Translational machinery components"/>
    <property type="match status" value="1"/>
</dbReference>
<dbReference type="PROSITE" id="PS00054">
    <property type="entry name" value="RIBOSOMAL_S11"/>
    <property type="match status" value="1"/>
</dbReference>
<keyword id="KW-1185">Reference proteome</keyword>
<keyword id="KW-0687">Ribonucleoprotein</keyword>
<keyword id="KW-0689">Ribosomal protein</keyword>
<keyword id="KW-0694">RNA-binding</keyword>
<keyword id="KW-0699">rRNA-binding</keyword>
<name>RS11_GRABC</name>
<comment type="function">
    <text evidence="1">Located on the platform of the 30S subunit, it bridges several disparate RNA helices of the 16S rRNA. Forms part of the Shine-Dalgarno cleft in the 70S ribosome.</text>
</comment>
<comment type="subunit">
    <text evidence="1">Part of the 30S ribosomal subunit. Interacts with proteins S7 and S18. Binds to IF-3.</text>
</comment>
<comment type="similarity">
    <text evidence="1">Belongs to the universal ribosomal protein uS11 family.</text>
</comment>
<sequence length="131" mass="13958">MARNATSSRPRKKERKNISSGVAHVAATFNNTMITISDAQGNAIAWSSAGAQGFKGSRKSTPYAAQVAAEDAGRKAREHGMETLEIEVSGPGSGRESALRALQAVGFAITAIRDTTPIPHNGCRPRKRRRV</sequence>
<reference key="1">
    <citation type="journal article" date="2007" name="J. Bacteriol.">
        <title>Genome sequence analysis of the emerging human pathogenic acetic acid bacterium Granulibacter bethesdensis.</title>
        <authorList>
            <person name="Greenberg D.E."/>
            <person name="Porcella S.F."/>
            <person name="Zelazny A.M."/>
            <person name="Virtaneva K."/>
            <person name="Sturdevant D.E."/>
            <person name="Kupko J.J. III"/>
            <person name="Barbian K.D."/>
            <person name="Babar A."/>
            <person name="Dorward D.W."/>
            <person name="Holland S.M."/>
        </authorList>
    </citation>
    <scope>NUCLEOTIDE SEQUENCE [LARGE SCALE GENOMIC DNA]</scope>
    <source>
        <strain>ATCC BAA-1260 / CGDNIH1</strain>
    </source>
</reference>
<accession>Q0BUM7</accession>
<feature type="chain" id="PRO_0000294765" description="Small ribosomal subunit protein uS11">
    <location>
        <begin position="1"/>
        <end position="131"/>
    </location>
</feature>
<organism>
    <name type="scientific">Granulibacter bethesdensis (strain ATCC BAA-1260 / CGDNIH1)</name>
    <dbReference type="NCBI Taxonomy" id="391165"/>
    <lineage>
        <taxon>Bacteria</taxon>
        <taxon>Pseudomonadati</taxon>
        <taxon>Pseudomonadota</taxon>
        <taxon>Alphaproteobacteria</taxon>
        <taxon>Acetobacterales</taxon>
        <taxon>Acetobacteraceae</taxon>
        <taxon>Granulibacter</taxon>
    </lineage>
</organism>
<evidence type="ECO:0000255" key="1">
    <source>
        <dbReference type="HAMAP-Rule" id="MF_01310"/>
    </source>
</evidence>
<evidence type="ECO:0000305" key="2"/>
<gene>
    <name evidence="1" type="primary">rpsK</name>
    <name type="ordered locus">GbCGDNIH1_0577</name>
</gene>
<protein>
    <recommendedName>
        <fullName evidence="1">Small ribosomal subunit protein uS11</fullName>
    </recommendedName>
    <alternativeName>
        <fullName evidence="2">30S ribosomal protein S11</fullName>
    </alternativeName>
</protein>
<proteinExistence type="inferred from homology"/>